<proteinExistence type="inferred from homology"/>
<sequence length="195" mass="21585">MPKLGMREIRRAQLIDATLLTIDQTGLAGTTLASVAQRASISTGIVSHYFGDKDGLLEATMRHVLRDLWQATSRRRRAARADPRSKLRAVVAANFDAEQTSGPVMKTWLAFWSESMHKPQLRRLQHVNTRRLYSNLCADFSKALPRAAARRAASGLAALIDGLWLRGALSGEPFDTKAALRTANDYIDLVLASRE</sequence>
<comment type="function">
    <text evidence="1">Repressor involved in the biosynthesis of the osmoprotectant glycine betaine. It represses transcription of the choline transporter BetT and the genes of BetAB involved in the synthesis of glycine betaine (By similarity).</text>
</comment>
<comment type="pathway">
    <text>Amine and polyamine biosynthesis; betaine biosynthesis via choline pathway [regulation].</text>
</comment>
<reference key="1">
    <citation type="journal article" date="2006" name="Proc. Natl. Acad. Sci. U.S.A.">
        <title>Burkholderia xenovorans LB400 harbors a multi-replicon, 9.73-Mbp genome shaped for versatility.</title>
        <authorList>
            <person name="Chain P.S.G."/>
            <person name="Denef V.J."/>
            <person name="Konstantinidis K.T."/>
            <person name="Vergez L.M."/>
            <person name="Agullo L."/>
            <person name="Reyes V.L."/>
            <person name="Hauser L."/>
            <person name="Cordova M."/>
            <person name="Gomez L."/>
            <person name="Gonzalez M."/>
            <person name="Land M."/>
            <person name="Lao V."/>
            <person name="Larimer F."/>
            <person name="LiPuma J.J."/>
            <person name="Mahenthiralingam E."/>
            <person name="Malfatti S.A."/>
            <person name="Marx C.J."/>
            <person name="Parnell J.J."/>
            <person name="Ramette A."/>
            <person name="Richardson P."/>
            <person name="Seeger M."/>
            <person name="Smith D."/>
            <person name="Spilker T."/>
            <person name="Sul W.J."/>
            <person name="Tsoi T.V."/>
            <person name="Ulrich L.E."/>
            <person name="Zhulin I.B."/>
            <person name="Tiedje J.M."/>
        </authorList>
    </citation>
    <scope>NUCLEOTIDE SEQUENCE [LARGE SCALE GENOMIC DNA]</scope>
    <source>
        <strain>LB400</strain>
    </source>
</reference>
<name>BETI_PARXL</name>
<keyword id="KW-0238">DNA-binding</keyword>
<keyword id="KW-1185">Reference proteome</keyword>
<keyword id="KW-0678">Repressor</keyword>
<keyword id="KW-0804">Transcription</keyword>
<keyword id="KW-0805">Transcription regulation</keyword>
<accession>Q13NG5</accession>
<dbReference type="EMBL" id="CP000271">
    <property type="protein sequence ID" value="ABE34374.1"/>
    <property type="molecule type" value="Genomic_DNA"/>
</dbReference>
<dbReference type="RefSeq" id="WP_011491702.1">
    <property type="nucleotide sequence ID" value="NC_007952.1"/>
</dbReference>
<dbReference type="SMR" id="Q13NG5"/>
<dbReference type="STRING" id="266265.Bxe_B1590"/>
<dbReference type="KEGG" id="bxb:DR64_6893"/>
<dbReference type="KEGG" id="bxe:Bxe_B1590"/>
<dbReference type="PATRIC" id="fig|266265.5.peg.6155"/>
<dbReference type="eggNOG" id="COG1309">
    <property type="taxonomic scope" value="Bacteria"/>
</dbReference>
<dbReference type="OrthoDB" id="7618612at2"/>
<dbReference type="UniPathway" id="UPA00529"/>
<dbReference type="Proteomes" id="UP000001817">
    <property type="component" value="Chromosome 2"/>
</dbReference>
<dbReference type="GO" id="GO:0003700">
    <property type="term" value="F:DNA-binding transcription factor activity"/>
    <property type="evidence" value="ECO:0007669"/>
    <property type="project" value="UniProtKB-UniRule"/>
</dbReference>
<dbReference type="GO" id="GO:0000976">
    <property type="term" value="F:transcription cis-regulatory region binding"/>
    <property type="evidence" value="ECO:0007669"/>
    <property type="project" value="TreeGrafter"/>
</dbReference>
<dbReference type="GO" id="GO:0019285">
    <property type="term" value="P:glycine betaine biosynthetic process from choline"/>
    <property type="evidence" value="ECO:0007669"/>
    <property type="project" value="UniProtKB-UniRule"/>
</dbReference>
<dbReference type="GO" id="GO:0045892">
    <property type="term" value="P:negative regulation of DNA-templated transcription"/>
    <property type="evidence" value="ECO:0007669"/>
    <property type="project" value="UniProtKB-UniRule"/>
</dbReference>
<dbReference type="Gene3D" id="1.10.357.10">
    <property type="entry name" value="Tetracycline Repressor, domain 2"/>
    <property type="match status" value="1"/>
</dbReference>
<dbReference type="HAMAP" id="MF_00768">
    <property type="entry name" value="HTH_type_BetI"/>
    <property type="match status" value="1"/>
</dbReference>
<dbReference type="InterPro" id="IPR039538">
    <property type="entry name" value="BetI_C"/>
</dbReference>
<dbReference type="InterPro" id="IPR023772">
    <property type="entry name" value="DNA-bd_HTH_TetR-type_CS"/>
</dbReference>
<dbReference type="InterPro" id="IPR009057">
    <property type="entry name" value="Homeodomain-like_sf"/>
</dbReference>
<dbReference type="InterPro" id="IPR050109">
    <property type="entry name" value="HTH-type_TetR-like_transc_reg"/>
</dbReference>
<dbReference type="InterPro" id="IPR001647">
    <property type="entry name" value="HTH_TetR"/>
</dbReference>
<dbReference type="InterPro" id="IPR036271">
    <property type="entry name" value="Tet_transcr_reg_TetR-rel_C_sf"/>
</dbReference>
<dbReference type="InterPro" id="IPR017757">
    <property type="entry name" value="Tscrpt_rep_BetI"/>
</dbReference>
<dbReference type="NCBIfam" id="TIGR03384">
    <property type="entry name" value="betaine_BetI"/>
    <property type="match status" value="1"/>
</dbReference>
<dbReference type="NCBIfam" id="NF001978">
    <property type="entry name" value="PRK00767.1"/>
    <property type="match status" value="1"/>
</dbReference>
<dbReference type="PANTHER" id="PTHR30055:SF234">
    <property type="entry name" value="HTH-TYPE TRANSCRIPTIONAL REGULATOR BETI"/>
    <property type="match status" value="1"/>
</dbReference>
<dbReference type="PANTHER" id="PTHR30055">
    <property type="entry name" value="HTH-TYPE TRANSCRIPTIONAL REGULATOR RUTR"/>
    <property type="match status" value="1"/>
</dbReference>
<dbReference type="Pfam" id="PF13977">
    <property type="entry name" value="TetR_C_6"/>
    <property type="match status" value="1"/>
</dbReference>
<dbReference type="Pfam" id="PF00440">
    <property type="entry name" value="TetR_N"/>
    <property type="match status" value="1"/>
</dbReference>
<dbReference type="SUPFAM" id="SSF46689">
    <property type="entry name" value="Homeodomain-like"/>
    <property type="match status" value="1"/>
</dbReference>
<dbReference type="SUPFAM" id="SSF48498">
    <property type="entry name" value="Tetracyclin repressor-like, C-terminal domain"/>
    <property type="match status" value="1"/>
</dbReference>
<dbReference type="PROSITE" id="PS01081">
    <property type="entry name" value="HTH_TETR_1"/>
    <property type="match status" value="1"/>
</dbReference>
<dbReference type="PROSITE" id="PS50977">
    <property type="entry name" value="HTH_TETR_2"/>
    <property type="match status" value="1"/>
</dbReference>
<organism>
    <name type="scientific">Paraburkholderia xenovorans (strain LB400)</name>
    <dbReference type="NCBI Taxonomy" id="266265"/>
    <lineage>
        <taxon>Bacteria</taxon>
        <taxon>Pseudomonadati</taxon>
        <taxon>Pseudomonadota</taxon>
        <taxon>Betaproteobacteria</taxon>
        <taxon>Burkholderiales</taxon>
        <taxon>Burkholderiaceae</taxon>
        <taxon>Paraburkholderia</taxon>
    </lineage>
</organism>
<gene>
    <name evidence="2" type="primary">betI</name>
    <name type="ordered locus">Bxeno_B1406</name>
    <name type="ORF">Bxe_B1590</name>
</gene>
<feature type="chain" id="PRO_0000257734" description="HTH-type transcriptional regulator BetI">
    <location>
        <begin position="1"/>
        <end position="195"/>
    </location>
</feature>
<feature type="domain" description="HTH tetR-type" evidence="2">
    <location>
        <begin position="8"/>
        <end position="68"/>
    </location>
</feature>
<feature type="DNA-binding region" description="H-T-H motif" evidence="2">
    <location>
        <begin position="31"/>
        <end position="50"/>
    </location>
</feature>
<protein>
    <recommendedName>
        <fullName evidence="2">HTH-type transcriptional regulator BetI</fullName>
    </recommendedName>
</protein>
<evidence type="ECO:0000250" key="1"/>
<evidence type="ECO:0000255" key="2">
    <source>
        <dbReference type="HAMAP-Rule" id="MF_00768"/>
    </source>
</evidence>